<sequence length="214" mass="23593">MQITVSNLKKSYGGSTVLDVESLTFESGKITGIIGPNGAGKTTLLNIISGIDMDFEGDVEYSGSDYSEVKRDITMVFQKGGLLKRSVFENIAYPLKLRGTDKNEIQQTVVELMRHLGIEELSSKKAHKLSGGETQRVALARALAIKPRALLLDEPTASIDPEYMETIEKCIVDYNRKSKATILIITHSMDQARRLCDNIVFLESGRVGEADGFF</sequence>
<keyword id="KW-0067">ATP-binding</keyword>
<keyword id="KW-0547">Nucleotide-binding</keyword>
<keyword id="KW-1278">Translocase</keyword>
<keyword id="KW-0813">Transport</keyword>
<feature type="chain" id="PRO_0000435512" description="Tungstate uptake system ATP-binding protein TupC">
    <location>
        <begin position="1"/>
        <end position="214"/>
    </location>
</feature>
<feature type="domain" description="ABC transporter" evidence="1">
    <location>
        <begin position="3"/>
        <end position="214"/>
    </location>
</feature>
<feature type="binding site" evidence="1">
    <location>
        <begin position="35"/>
        <end position="42"/>
    </location>
    <ligand>
        <name>ATP</name>
        <dbReference type="ChEBI" id="CHEBI:30616"/>
    </ligand>
</feature>
<accession>Q93KD4</accession>
<protein>
    <recommendedName>
        <fullName evidence="3">Tungstate uptake system ATP-binding protein TupC</fullName>
        <ecNumber evidence="4">7.3.2.6</ecNumber>
    </recommendedName>
</protein>
<name>TUPC_PEPAC</name>
<proteinExistence type="evidence at protein level"/>
<comment type="function">
    <text evidence="4">Part of an ABC transporter complex involved in tungstate uptake. Probably responsible for energy coupling to the transport system.</text>
</comment>
<comment type="catalytic activity">
    <reaction evidence="4">
        <text>tungstate(in) + ATP + H2O = tungstate(out) + ADP + phosphate + H(+)</text>
        <dbReference type="Rhea" id="RHEA:35027"/>
        <dbReference type="ChEBI" id="CHEBI:15377"/>
        <dbReference type="ChEBI" id="CHEBI:15378"/>
        <dbReference type="ChEBI" id="CHEBI:30616"/>
        <dbReference type="ChEBI" id="CHEBI:43474"/>
        <dbReference type="ChEBI" id="CHEBI:46502"/>
        <dbReference type="ChEBI" id="CHEBI:456216"/>
        <dbReference type="EC" id="7.3.2.6"/>
    </reaction>
</comment>
<comment type="subunit">
    <text evidence="3">The complex is composed of two ATP-binding proteins (TupC), two transmembrane proteins (TupB) and a solute-binding protein (TupA).</text>
</comment>
<comment type="similarity">
    <text evidence="3">Belongs to the ABC transporter superfamily.</text>
</comment>
<evidence type="ECO:0000255" key="1">
    <source>
        <dbReference type="PROSITE-ProRule" id="PRU00434"/>
    </source>
</evidence>
<evidence type="ECO:0000303" key="2">
    <source>
    </source>
</evidence>
<evidence type="ECO:0000305" key="3"/>
<evidence type="ECO:0000305" key="4">
    <source>
    </source>
</evidence>
<reference key="1">
    <citation type="journal article" date="2001" name="J. Biol. Chem.">
        <title>Tungstate uptake by a highly specific ABC transporter in Eubacterium acidaminophilum.</title>
        <authorList>
            <person name="Makdessi K."/>
            <person name="Andreesen J.R."/>
            <person name="Pich A."/>
        </authorList>
    </citation>
    <scope>NUCLEOTIDE SEQUENCE [GENOMIC DNA]</scope>
    <scope>PROBABLE FUNCTION IN TUNGSTATE UPTAKE</scope>
    <source>
        <strain>ATCC 49065 / DSM 3953 / al-2</strain>
    </source>
</reference>
<organism>
    <name type="scientific">Peptoclostridium acidaminophilum</name>
    <name type="common">Eubacterium acidaminophilum</name>
    <dbReference type="NCBI Taxonomy" id="1731"/>
    <lineage>
        <taxon>Bacteria</taxon>
        <taxon>Bacillati</taxon>
        <taxon>Bacillota</taxon>
        <taxon>Clostridia</taxon>
        <taxon>Peptostreptococcales</taxon>
        <taxon>Peptoclostridiaceae</taxon>
        <taxon>Peptoclostridium</taxon>
    </lineage>
</organism>
<dbReference type="EC" id="7.3.2.6" evidence="4"/>
<dbReference type="EMBL" id="AJ291988">
    <property type="protein sequence ID" value="CAC40784.1"/>
    <property type="molecule type" value="Genomic_DNA"/>
</dbReference>
<dbReference type="SMR" id="Q93KD4"/>
<dbReference type="TCDB" id="3.A.1.6.2">
    <property type="family name" value="the atp-binding cassette (abc) superfamily"/>
</dbReference>
<dbReference type="GO" id="GO:1901238">
    <property type="term" value="F:ABC-type tungstate transporter activity"/>
    <property type="evidence" value="ECO:0007669"/>
    <property type="project" value="UniProtKB-EC"/>
</dbReference>
<dbReference type="GO" id="GO:0005524">
    <property type="term" value="F:ATP binding"/>
    <property type="evidence" value="ECO:0007669"/>
    <property type="project" value="UniProtKB-KW"/>
</dbReference>
<dbReference type="GO" id="GO:0016887">
    <property type="term" value="F:ATP hydrolysis activity"/>
    <property type="evidence" value="ECO:0007669"/>
    <property type="project" value="InterPro"/>
</dbReference>
<dbReference type="Gene3D" id="3.40.50.300">
    <property type="entry name" value="P-loop containing nucleotide triphosphate hydrolases"/>
    <property type="match status" value="1"/>
</dbReference>
<dbReference type="InterPro" id="IPR003593">
    <property type="entry name" value="AAA+_ATPase"/>
</dbReference>
<dbReference type="InterPro" id="IPR050093">
    <property type="entry name" value="ABC_SmlMolc_Importer"/>
</dbReference>
<dbReference type="InterPro" id="IPR003439">
    <property type="entry name" value="ABC_transporter-like_ATP-bd"/>
</dbReference>
<dbReference type="InterPro" id="IPR027417">
    <property type="entry name" value="P-loop_NTPase"/>
</dbReference>
<dbReference type="PANTHER" id="PTHR42781:SF9">
    <property type="entry name" value="AMINO ACID ABC TRANSPORTER, ATP-BINDING PROTEIN-RELATED"/>
    <property type="match status" value="1"/>
</dbReference>
<dbReference type="PANTHER" id="PTHR42781">
    <property type="entry name" value="SPERMIDINE/PUTRESCINE IMPORT ATP-BINDING PROTEIN POTA"/>
    <property type="match status" value="1"/>
</dbReference>
<dbReference type="Pfam" id="PF00005">
    <property type="entry name" value="ABC_tran"/>
    <property type="match status" value="1"/>
</dbReference>
<dbReference type="SMART" id="SM00382">
    <property type="entry name" value="AAA"/>
    <property type="match status" value="1"/>
</dbReference>
<dbReference type="SUPFAM" id="SSF52540">
    <property type="entry name" value="P-loop containing nucleoside triphosphate hydrolases"/>
    <property type="match status" value="1"/>
</dbReference>
<dbReference type="PROSITE" id="PS50893">
    <property type="entry name" value="ABC_TRANSPORTER_2"/>
    <property type="match status" value="1"/>
</dbReference>
<gene>
    <name evidence="2" type="primary">tupC</name>
</gene>